<gene>
    <name type="primary">Dym</name>
</gene>
<sequence>MGSNSSKISDLPKNEYLKKLSGPESISENDPFWNQLFSFSFPAPTSSSELKLLEEATISVCKSLVENNPRTGNLAALTKVFLSRTRELRLSAECQNHIFIWQTHNALFIICCLLKVFIRELSEEELQLHFTYEEKSPGSYSSDSEDLLEELLCSLVQLITDTPLLDITYEIAVEAISAMVVFLSCQLFHKEVLRQSISHKYLMQGPCLPYTSKLVKTLLYNFIRQEKPPPPGTHVFPQQSDGGGLLYGLASGVATGLWTVFTLGGAGSKAAASPELTSPLANQSLLLLLVLVNLTDAPDIPNPYRQAVSSFKNTQDSSPFPSSIPHTFQINFNSLYTALCEQQTSDQATLLLYTLLHQNSNVRTYVLARTDMENLVLPILEILYHVEERNSHHVYMALIILLILTEDDGFNRSIHEVILRNITWYSERVLTEISLGSLLILVVIRTIQYNMTRTRDKYLHTNCLAALANMSAQFRSLHQYAAQRIISLFSLLSKKHNKVLEQATQSLRGPLSSSDVPLPDYAQDLSVIEEVIRMMLEIINSCLTNSLHHNPNLVYALLYKRDLFEQFRTHPSFQDIMQNIDLVISFFSSRLLQAGAELSVERVLEIIKQGVVALPKDRLKKFPELKFKYVEEEQPEEFFIPYVWSLVYNSAVGLYWNPQDIQLFAMDSD</sequence>
<reference key="1">
    <citation type="journal article" date="2005" name="Science">
        <title>The transcriptional landscape of the mammalian genome.</title>
        <authorList>
            <person name="Carninci P."/>
            <person name="Kasukawa T."/>
            <person name="Katayama S."/>
            <person name="Gough J."/>
            <person name="Frith M.C."/>
            <person name="Maeda N."/>
            <person name="Oyama R."/>
            <person name="Ravasi T."/>
            <person name="Lenhard B."/>
            <person name="Wells C."/>
            <person name="Kodzius R."/>
            <person name="Shimokawa K."/>
            <person name="Bajic V.B."/>
            <person name="Brenner S.E."/>
            <person name="Batalov S."/>
            <person name="Forrest A.R."/>
            <person name="Zavolan M."/>
            <person name="Davis M.J."/>
            <person name="Wilming L.G."/>
            <person name="Aidinis V."/>
            <person name="Allen J.E."/>
            <person name="Ambesi-Impiombato A."/>
            <person name="Apweiler R."/>
            <person name="Aturaliya R.N."/>
            <person name="Bailey T.L."/>
            <person name="Bansal M."/>
            <person name="Baxter L."/>
            <person name="Beisel K.W."/>
            <person name="Bersano T."/>
            <person name="Bono H."/>
            <person name="Chalk A.M."/>
            <person name="Chiu K.P."/>
            <person name="Choudhary V."/>
            <person name="Christoffels A."/>
            <person name="Clutterbuck D.R."/>
            <person name="Crowe M.L."/>
            <person name="Dalla E."/>
            <person name="Dalrymple B.P."/>
            <person name="de Bono B."/>
            <person name="Della Gatta G."/>
            <person name="di Bernardo D."/>
            <person name="Down T."/>
            <person name="Engstrom P."/>
            <person name="Fagiolini M."/>
            <person name="Faulkner G."/>
            <person name="Fletcher C.F."/>
            <person name="Fukushima T."/>
            <person name="Furuno M."/>
            <person name="Futaki S."/>
            <person name="Gariboldi M."/>
            <person name="Georgii-Hemming P."/>
            <person name="Gingeras T.R."/>
            <person name="Gojobori T."/>
            <person name="Green R.E."/>
            <person name="Gustincich S."/>
            <person name="Harbers M."/>
            <person name="Hayashi Y."/>
            <person name="Hensch T.K."/>
            <person name="Hirokawa N."/>
            <person name="Hill D."/>
            <person name="Huminiecki L."/>
            <person name="Iacono M."/>
            <person name="Ikeo K."/>
            <person name="Iwama A."/>
            <person name="Ishikawa T."/>
            <person name="Jakt M."/>
            <person name="Kanapin A."/>
            <person name="Katoh M."/>
            <person name="Kawasawa Y."/>
            <person name="Kelso J."/>
            <person name="Kitamura H."/>
            <person name="Kitano H."/>
            <person name="Kollias G."/>
            <person name="Krishnan S.P."/>
            <person name="Kruger A."/>
            <person name="Kummerfeld S.K."/>
            <person name="Kurochkin I.V."/>
            <person name="Lareau L.F."/>
            <person name="Lazarevic D."/>
            <person name="Lipovich L."/>
            <person name="Liu J."/>
            <person name="Liuni S."/>
            <person name="McWilliam S."/>
            <person name="Madan Babu M."/>
            <person name="Madera M."/>
            <person name="Marchionni L."/>
            <person name="Matsuda H."/>
            <person name="Matsuzawa S."/>
            <person name="Miki H."/>
            <person name="Mignone F."/>
            <person name="Miyake S."/>
            <person name="Morris K."/>
            <person name="Mottagui-Tabar S."/>
            <person name="Mulder N."/>
            <person name="Nakano N."/>
            <person name="Nakauchi H."/>
            <person name="Ng P."/>
            <person name="Nilsson R."/>
            <person name="Nishiguchi S."/>
            <person name="Nishikawa S."/>
            <person name="Nori F."/>
            <person name="Ohara O."/>
            <person name="Okazaki Y."/>
            <person name="Orlando V."/>
            <person name="Pang K.C."/>
            <person name="Pavan W.J."/>
            <person name="Pavesi G."/>
            <person name="Pesole G."/>
            <person name="Petrovsky N."/>
            <person name="Piazza S."/>
            <person name="Reed J."/>
            <person name="Reid J.F."/>
            <person name="Ring B.Z."/>
            <person name="Ringwald M."/>
            <person name="Rost B."/>
            <person name="Ruan Y."/>
            <person name="Salzberg S.L."/>
            <person name="Sandelin A."/>
            <person name="Schneider C."/>
            <person name="Schoenbach C."/>
            <person name="Sekiguchi K."/>
            <person name="Semple C.A."/>
            <person name="Seno S."/>
            <person name="Sessa L."/>
            <person name="Sheng Y."/>
            <person name="Shibata Y."/>
            <person name="Shimada H."/>
            <person name="Shimada K."/>
            <person name="Silva D."/>
            <person name="Sinclair B."/>
            <person name="Sperling S."/>
            <person name="Stupka E."/>
            <person name="Sugiura K."/>
            <person name="Sultana R."/>
            <person name="Takenaka Y."/>
            <person name="Taki K."/>
            <person name="Tammoja K."/>
            <person name="Tan S.L."/>
            <person name="Tang S."/>
            <person name="Taylor M.S."/>
            <person name="Tegner J."/>
            <person name="Teichmann S.A."/>
            <person name="Ueda H.R."/>
            <person name="van Nimwegen E."/>
            <person name="Verardo R."/>
            <person name="Wei C.L."/>
            <person name="Yagi K."/>
            <person name="Yamanishi H."/>
            <person name="Zabarovsky E."/>
            <person name="Zhu S."/>
            <person name="Zimmer A."/>
            <person name="Hide W."/>
            <person name="Bult C."/>
            <person name="Grimmond S.M."/>
            <person name="Teasdale R.D."/>
            <person name="Liu E.T."/>
            <person name="Brusic V."/>
            <person name="Quackenbush J."/>
            <person name="Wahlestedt C."/>
            <person name="Mattick J.S."/>
            <person name="Hume D.A."/>
            <person name="Kai C."/>
            <person name="Sasaki D."/>
            <person name="Tomaru Y."/>
            <person name="Fukuda S."/>
            <person name="Kanamori-Katayama M."/>
            <person name="Suzuki M."/>
            <person name="Aoki J."/>
            <person name="Arakawa T."/>
            <person name="Iida J."/>
            <person name="Imamura K."/>
            <person name="Itoh M."/>
            <person name="Kato T."/>
            <person name="Kawaji H."/>
            <person name="Kawagashira N."/>
            <person name="Kawashima T."/>
            <person name="Kojima M."/>
            <person name="Kondo S."/>
            <person name="Konno H."/>
            <person name="Nakano K."/>
            <person name="Ninomiya N."/>
            <person name="Nishio T."/>
            <person name="Okada M."/>
            <person name="Plessy C."/>
            <person name="Shibata K."/>
            <person name="Shiraki T."/>
            <person name="Suzuki S."/>
            <person name="Tagami M."/>
            <person name="Waki K."/>
            <person name="Watahiki A."/>
            <person name="Okamura-Oho Y."/>
            <person name="Suzuki H."/>
            <person name="Kawai J."/>
            <person name="Hayashizaki Y."/>
        </authorList>
    </citation>
    <scope>NUCLEOTIDE SEQUENCE [LARGE SCALE MRNA] (ISOFORM 1)</scope>
    <source>
        <strain>C57BL/6J</strain>
        <strain>NOD</strain>
        <tissue>Bone marrow</tissue>
        <tissue>Hippocampus</tissue>
    </source>
</reference>
<reference key="2">
    <citation type="journal article" date="2004" name="Genome Res.">
        <title>The status, quality, and expansion of the NIH full-length cDNA project: the Mammalian Gene Collection (MGC).</title>
        <authorList>
            <consortium name="The MGC Project Team"/>
        </authorList>
    </citation>
    <scope>NUCLEOTIDE SEQUENCE [LARGE SCALE MRNA] (ISOFORMS 1 AND 2)</scope>
    <source>
        <strain>FVB/N</strain>
        <tissue>Mammary tumor</tissue>
        <tissue>Salivary gland</tissue>
    </source>
</reference>
<reference key="3">
    <citation type="journal article" date="2010" name="Cell">
        <title>A tissue-specific atlas of mouse protein phosphorylation and expression.</title>
        <authorList>
            <person name="Huttlin E.L."/>
            <person name="Jedrychowski M.P."/>
            <person name="Elias J.E."/>
            <person name="Goswami T."/>
            <person name="Rad R."/>
            <person name="Beausoleil S.A."/>
            <person name="Villen J."/>
            <person name="Haas W."/>
            <person name="Sowa M.E."/>
            <person name="Gygi S.P."/>
        </authorList>
    </citation>
    <scope>IDENTIFICATION BY MASS SPECTROMETRY [LARGE SCALE ANALYSIS]</scope>
    <source>
        <tissue>Brain</tissue>
        <tissue>Liver</tissue>
        <tissue>Lung</tissue>
        <tissue>Spleen</tissue>
        <tissue>Testis</tissue>
    </source>
</reference>
<comment type="function">
    <text evidence="1">Necessary for correct organization of Golgi apparatus. Involved in bone development.</text>
</comment>
<comment type="subunit">
    <text evidence="1">Interacts with GOLM1 and PPIB.</text>
</comment>
<comment type="subcellular location">
    <subcellularLocation>
        <location>Cytoplasm</location>
    </subcellularLocation>
    <subcellularLocation>
        <location evidence="1">Golgi apparatus</location>
    </subcellularLocation>
    <subcellularLocation>
        <location evidence="2">Membrane</location>
        <topology evidence="2">Lipid-anchor</topology>
    </subcellularLocation>
    <text evidence="1">Sequence analysis programs predict 1 transmembrane region. However, it has been shown in human that it is not a stably anchored transmembrane protein but it weakly associates with the Golgi apparatus and shuttles between the Golgi and the cytosol (By similarity).</text>
</comment>
<comment type="alternative products">
    <event type="alternative splicing"/>
    <isoform>
        <id>Q8CHY3-1</id>
        <name>1</name>
        <sequence type="displayed"/>
    </isoform>
    <isoform>
        <id>Q8CHY3-2</id>
        <name>2</name>
        <sequence type="described" ref="VSP_036444 VSP_036445"/>
    </isoform>
</comment>
<comment type="PTM">
    <text evidence="1">Myristoylated in vitro; myristoylation is not essential for protein targeting to Golgi compartment.</text>
</comment>
<comment type="similarity">
    <text evidence="4">Belongs to the dymeclin family.</text>
</comment>
<comment type="sequence caution" evidence="4">
    <conflict type="erroneous initiation">
        <sequence resource="EMBL-CDS" id="AAH18220"/>
    </conflict>
</comment>
<comment type="sequence caution" evidence="4">
    <conflict type="erroneous initiation">
        <sequence resource="EMBL-CDS" id="BAC33983"/>
    </conflict>
</comment>
<comment type="sequence caution" evidence="4">
    <conflict type="erroneous termination">
        <sequence resource="EMBL-CDS" id="BAE32833"/>
    </conflict>
    <text>Truncated C-terminus.</text>
</comment>
<feature type="initiator methionine" description="Removed" evidence="2">
    <location>
        <position position="1"/>
    </location>
</feature>
<feature type="chain" id="PRO_0000086884" description="Dymeclin">
    <location>
        <begin position="2"/>
        <end position="669"/>
    </location>
</feature>
<feature type="lipid moiety-binding region" description="N-myristoyl glycine" evidence="2">
    <location>
        <position position="2"/>
    </location>
</feature>
<feature type="splice variant" id="VSP_036444" description="In isoform 2." evidence="3">
    <original>TSKLVK</original>
    <variation>PFSPGV</variation>
    <location>
        <begin position="211"/>
        <end position="216"/>
    </location>
</feature>
<feature type="splice variant" id="VSP_036445" description="In isoform 2." evidence="3">
    <location>
        <begin position="217"/>
        <end position="669"/>
    </location>
</feature>
<feature type="sequence conflict" description="In Ref. 1; BAE32833." evidence="4" ref="1">
    <original>N</original>
    <variation>Y</variation>
    <location>
        <position position="313"/>
    </location>
</feature>
<feature type="sequence conflict" description="In Ref. 2; AAH18220." evidence="4" ref="2">
    <original>Q</original>
    <variation>K</variation>
    <location>
        <position position="505"/>
    </location>
</feature>
<organism>
    <name type="scientific">Mus musculus</name>
    <name type="common">Mouse</name>
    <dbReference type="NCBI Taxonomy" id="10090"/>
    <lineage>
        <taxon>Eukaryota</taxon>
        <taxon>Metazoa</taxon>
        <taxon>Chordata</taxon>
        <taxon>Craniata</taxon>
        <taxon>Vertebrata</taxon>
        <taxon>Euteleostomi</taxon>
        <taxon>Mammalia</taxon>
        <taxon>Eutheria</taxon>
        <taxon>Euarchontoglires</taxon>
        <taxon>Glires</taxon>
        <taxon>Rodentia</taxon>
        <taxon>Myomorpha</taxon>
        <taxon>Muroidea</taxon>
        <taxon>Muridae</taxon>
        <taxon>Murinae</taxon>
        <taxon>Mus</taxon>
        <taxon>Mus</taxon>
    </lineage>
</organism>
<keyword id="KW-0025">Alternative splicing</keyword>
<keyword id="KW-0963">Cytoplasm</keyword>
<keyword id="KW-0333">Golgi apparatus</keyword>
<keyword id="KW-0449">Lipoprotein</keyword>
<keyword id="KW-0472">Membrane</keyword>
<keyword id="KW-0519">Myristate</keyword>
<keyword id="KW-1185">Reference proteome</keyword>
<accession>Q8CHY3</accession>
<accession>Q3U3F3</accession>
<accession>Q3UDW2</accession>
<accession>Q569W1</accession>
<accession>Q8C7M2</accession>
<accession>Q8VCZ4</accession>
<dbReference type="EMBL" id="AK049909">
    <property type="protein sequence ID" value="BAC33983.1"/>
    <property type="status" value="ALT_INIT"/>
    <property type="molecule type" value="mRNA"/>
</dbReference>
<dbReference type="EMBL" id="AK149628">
    <property type="protein sequence ID" value="BAE28996.1"/>
    <property type="molecule type" value="mRNA"/>
</dbReference>
<dbReference type="EMBL" id="AK149891">
    <property type="protein sequence ID" value="BAE29149.1"/>
    <property type="molecule type" value="mRNA"/>
</dbReference>
<dbReference type="EMBL" id="AK154794">
    <property type="protein sequence ID" value="BAE32833.1"/>
    <property type="status" value="ALT_SEQ"/>
    <property type="molecule type" value="mRNA"/>
</dbReference>
<dbReference type="EMBL" id="BC018220">
    <property type="protein sequence ID" value="AAH18220.1"/>
    <property type="status" value="ALT_INIT"/>
    <property type="molecule type" value="mRNA"/>
</dbReference>
<dbReference type="EMBL" id="BC038276">
    <property type="protein sequence ID" value="AAH38276.1"/>
    <property type="molecule type" value="mRNA"/>
</dbReference>
<dbReference type="EMBL" id="BC092283">
    <property type="protein sequence ID" value="AAH92283.1"/>
    <property type="molecule type" value="mRNA"/>
</dbReference>
<dbReference type="CCDS" id="CCDS29346.1">
    <molecule id="Q8CHY3-1"/>
</dbReference>
<dbReference type="RefSeq" id="NP_082003.1">
    <molecule id="Q8CHY3-1"/>
    <property type="nucleotide sequence ID" value="NM_027727.3"/>
</dbReference>
<dbReference type="RefSeq" id="XP_006526282.1">
    <property type="nucleotide sequence ID" value="XM_006526219.3"/>
</dbReference>
<dbReference type="BioGRID" id="213282">
    <property type="interactions" value="2"/>
</dbReference>
<dbReference type="FunCoup" id="Q8CHY3">
    <property type="interactions" value="3505"/>
</dbReference>
<dbReference type="STRING" id="10090.ENSMUSP00000047054"/>
<dbReference type="iPTMnet" id="Q8CHY3"/>
<dbReference type="PhosphoSitePlus" id="Q8CHY3"/>
<dbReference type="SwissPalm" id="Q8CHY3"/>
<dbReference type="PaxDb" id="10090-ENSMUSP00000047054"/>
<dbReference type="PeptideAtlas" id="Q8CHY3"/>
<dbReference type="ProteomicsDB" id="275419">
    <molecule id="Q8CHY3-1"/>
</dbReference>
<dbReference type="ProteomicsDB" id="275420">
    <molecule id="Q8CHY3-2"/>
</dbReference>
<dbReference type="Pumba" id="Q8CHY3"/>
<dbReference type="Antibodypedia" id="22572">
    <property type="antibodies" value="126 antibodies from 21 providers"/>
</dbReference>
<dbReference type="DNASU" id="69190"/>
<dbReference type="Ensembl" id="ENSMUST00000039608.9">
    <molecule id="Q8CHY3-1"/>
    <property type="protein sequence ID" value="ENSMUSP00000047054.8"/>
    <property type="gene ID" value="ENSMUSG00000035765.11"/>
</dbReference>
<dbReference type="GeneID" id="69190"/>
<dbReference type="KEGG" id="mmu:69190"/>
<dbReference type="UCSC" id="uc008fpz.1">
    <molecule id="Q8CHY3-1"/>
    <property type="organism name" value="mouse"/>
</dbReference>
<dbReference type="AGR" id="MGI:1918480"/>
<dbReference type="CTD" id="54808"/>
<dbReference type="MGI" id="MGI:1918480">
    <property type="gene designation" value="Dym"/>
</dbReference>
<dbReference type="VEuPathDB" id="HostDB:ENSMUSG00000035765"/>
<dbReference type="eggNOG" id="KOG2225">
    <property type="taxonomic scope" value="Eukaryota"/>
</dbReference>
<dbReference type="GeneTree" id="ENSGT00390000008772"/>
<dbReference type="HOGENOM" id="CLU_013309_2_0_1"/>
<dbReference type="InParanoid" id="Q8CHY3"/>
<dbReference type="OMA" id="PYVCQRF"/>
<dbReference type="OrthoDB" id="10253409at2759"/>
<dbReference type="PhylomeDB" id="Q8CHY3"/>
<dbReference type="TreeFam" id="TF314870"/>
<dbReference type="BioGRID-ORCS" id="69190">
    <property type="hits" value="4 hits in 77 CRISPR screens"/>
</dbReference>
<dbReference type="ChiTaRS" id="Dym">
    <property type="organism name" value="mouse"/>
</dbReference>
<dbReference type="PRO" id="PR:Q8CHY3"/>
<dbReference type="Proteomes" id="UP000000589">
    <property type="component" value="Chromosome 18"/>
</dbReference>
<dbReference type="RNAct" id="Q8CHY3">
    <property type="molecule type" value="protein"/>
</dbReference>
<dbReference type="Bgee" id="ENSMUSG00000035765">
    <property type="expression patterns" value="Expressed in spermatocyte and 267 other cell types or tissues"/>
</dbReference>
<dbReference type="ExpressionAtlas" id="Q8CHY3">
    <property type="expression patterns" value="baseline and differential"/>
</dbReference>
<dbReference type="GO" id="GO:0005737">
    <property type="term" value="C:cytoplasm"/>
    <property type="evidence" value="ECO:0000250"/>
    <property type="project" value="UniProtKB"/>
</dbReference>
<dbReference type="GO" id="GO:0005794">
    <property type="term" value="C:Golgi apparatus"/>
    <property type="evidence" value="ECO:0000250"/>
    <property type="project" value="UniProtKB"/>
</dbReference>
<dbReference type="GO" id="GO:0016020">
    <property type="term" value="C:membrane"/>
    <property type="evidence" value="ECO:0007669"/>
    <property type="project" value="UniProtKB-SubCell"/>
</dbReference>
<dbReference type="GO" id="GO:0060348">
    <property type="term" value="P:bone development"/>
    <property type="evidence" value="ECO:0000250"/>
    <property type="project" value="UniProtKB"/>
</dbReference>
<dbReference type="GO" id="GO:0007030">
    <property type="term" value="P:Golgi organization"/>
    <property type="evidence" value="ECO:0000250"/>
    <property type="project" value="UniProtKB"/>
</dbReference>
<dbReference type="InterPro" id="IPR016024">
    <property type="entry name" value="ARM-type_fold"/>
</dbReference>
<dbReference type="InterPro" id="IPR019142">
    <property type="entry name" value="Dymeclin"/>
</dbReference>
<dbReference type="PANTHER" id="PTHR12895">
    <property type="entry name" value="DYMECLIN"/>
    <property type="match status" value="1"/>
</dbReference>
<dbReference type="PANTHER" id="PTHR12895:SF9">
    <property type="entry name" value="DYMECLIN"/>
    <property type="match status" value="1"/>
</dbReference>
<dbReference type="Pfam" id="PF09742">
    <property type="entry name" value="Dymeclin"/>
    <property type="match status" value="1"/>
</dbReference>
<dbReference type="SUPFAM" id="SSF48371">
    <property type="entry name" value="ARM repeat"/>
    <property type="match status" value="1"/>
</dbReference>
<evidence type="ECO:0000250" key="1"/>
<evidence type="ECO:0000250" key="2">
    <source>
        <dbReference type="UniProtKB" id="Q7RTS9"/>
    </source>
</evidence>
<evidence type="ECO:0000303" key="3">
    <source>
    </source>
</evidence>
<evidence type="ECO:0000305" key="4"/>
<name>DYM_MOUSE</name>
<proteinExistence type="evidence at protein level"/>
<protein>
    <recommendedName>
        <fullName>Dymeclin</fullName>
    </recommendedName>
</protein>